<sequence>MAYPLQLGLQDATSPIMEELMNFHDHTLMIVFLISSLVLYIISLMLTTKLTHTSTMDAQEVETIWTILPAAILVLIALPSLRILYMMDEINNPVLTVKTMGHQWYWSYEYTDYEDLCFDSYMIPTNDLKPGELRLLEVDNRVVLPMELPIRMLISSEDVLHSWAVPSLGLKTDAIPGRLNQATVSSNRPGLFYGQCSEICGSNHSFMPIVLEMVPLKYFENWSASMI</sequence>
<protein>
    <recommendedName>
        <fullName>Cytochrome c oxidase subunit 2</fullName>
        <ecNumber>7.1.1.9</ecNumber>
    </recommendedName>
    <alternativeName>
        <fullName>Cytochrome c oxidase polypeptide II</fullName>
    </alternativeName>
</protein>
<comment type="function">
    <text evidence="3">Component of the cytochrome c oxidase, the last enzyme in the mitochondrial electron transport chain which drives oxidative phosphorylation. The respiratory chain contains 3 multisubunit complexes succinate dehydrogenase (complex II, CII), ubiquinol-cytochrome c oxidoreductase (cytochrome b-c1 complex, complex III, CIII) and cytochrome c oxidase (complex IV, CIV), that cooperate to transfer electrons derived from NADH and succinate to molecular oxygen, creating an electrochemical gradient over the inner membrane that drives transmembrane transport and the ATP synthase. Cytochrome c oxidase is the component of the respiratory chain that catalyzes the reduction of oxygen to water. Electrons originating from reduced cytochrome c in the intermembrane space (IMS) are transferred via the dinuclear copper A center (CU(A)) of subunit 2 and heme A of subunit 1 to the active site in subunit 1, a binuclear center (BNC) formed by heme A3 and copper B (CU(B)). The BNC reduces molecular oxygen to 2 water molecules using 4 electrons from cytochrome c in the IMS and 4 protons from the mitochondrial matrix.</text>
</comment>
<comment type="catalytic activity">
    <reaction evidence="3">
        <text>4 Fe(II)-[cytochrome c] + O2 + 8 H(+)(in) = 4 Fe(III)-[cytochrome c] + 2 H2O + 4 H(+)(out)</text>
        <dbReference type="Rhea" id="RHEA:11436"/>
        <dbReference type="Rhea" id="RHEA-COMP:10350"/>
        <dbReference type="Rhea" id="RHEA-COMP:14399"/>
        <dbReference type="ChEBI" id="CHEBI:15377"/>
        <dbReference type="ChEBI" id="CHEBI:15378"/>
        <dbReference type="ChEBI" id="CHEBI:15379"/>
        <dbReference type="ChEBI" id="CHEBI:29033"/>
        <dbReference type="ChEBI" id="CHEBI:29034"/>
        <dbReference type="EC" id="7.1.1.9"/>
    </reaction>
    <physiologicalReaction direction="left-to-right" evidence="3">
        <dbReference type="Rhea" id="RHEA:11437"/>
    </physiologicalReaction>
</comment>
<comment type="cofactor">
    <cofactor evidence="4">
        <name>Cu cation</name>
        <dbReference type="ChEBI" id="CHEBI:23378"/>
    </cofactor>
    <text evidence="4">Binds a dinuclear copper A center per subunit.</text>
</comment>
<comment type="subunit">
    <text evidence="1 4">Component of the cytochrome c oxidase (complex IV, CIV), a multisubunit enzyme composed of 14 subunits. The complex is composed of a catalytic core of 3 subunits MT-CO1, MT-CO2 and MT-CO3, encoded in the mitochondrial DNA, and 11 supernumerary subunits COX4I, COX5A, COX5B, COX6A, COX6B, COX6C, COX7A, COX7B, COX7C, COX8 and NDUFA4, which are encoded in the nuclear genome. The complex exists as a monomer or a dimer and forms supercomplexes (SCs) in the inner mitochondrial membrane with NADH-ubiquinone oxidoreductase (complex I, CI) and ubiquinol-cytochrome c oxidoreductase (cytochrome b-c1 complex, complex III, CIII), resulting in different assemblies (supercomplex SCI(1)III(2)IV(1) and megacomplex MCI(2)III(2)IV(2)) (By similarity). Found in a complex with TMEM177, COA6, COX18, COX20, SCO1 and SCO2. Interacts with TMEM177 in a COX20-dependent manner. Interacts with COX20. Interacts with COX16 (By similarity).</text>
</comment>
<comment type="subcellular location">
    <subcellularLocation>
        <location evidence="4">Mitochondrion inner membrane</location>
        <topology evidence="4">Multi-pass membrane protein</topology>
    </subcellularLocation>
</comment>
<comment type="similarity">
    <text evidence="5">Belongs to the cytochrome c oxidase subunit 2 family.</text>
</comment>
<keyword id="KW-0186">Copper</keyword>
<keyword id="KW-0249">Electron transport</keyword>
<keyword id="KW-0460">Magnesium</keyword>
<keyword id="KW-0472">Membrane</keyword>
<keyword id="KW-0479">Metal-binding</keyword>
<keyword id="KW-0496">Mitochondrion</keyword>
<keyword id="KW-0999">Mitochondrion inner membrane</keyword>
<keyword id="KW-0597">Phosphoprotein</keyword>
<keyword id="KW-0679">Respiratory chain</keyword>
<keyword id="KW-1278">Translocase</keyword>
<keyword id="KW-0812">Transmembrane</keyword>
<keyword id="KW-1133">Transmembrane helix</keyword>
<keyword id="KW-0813">Transport</keyword>
<reference key="1">
    <citation type="journal article" date="2005" name="Mol. Phylogenet. Evol.">
        <title>Multigene phylogeny of the Old World mice, Murinae, reveals distinct geographic lineages and the declining utility of mitochondrial genes compared to nuclear genes.</title>
        <authorList>
            <person name="Steppan S.J."/>
            <person name="Adkins R.M."/>
            <person name="Spinks P.Q."/>
            <person name="Hale C."/>
        </authorList>
    </citation>
    <scope>NUCLEOTIDE SEQUENCE [GENOMIC DNA]</scope>
</reference>
<feature type="chain" id="PRO_0000257850" description="Cytochrome c oxidase subunit 2">
    <location>
        <begin position="1"/>
        <end position="227"/>
    </location>
</feature>
<feature type="topological domain" description="Mitochondrial intermembrane" evidence="4">
    <location>
        <begin position="1"/>
        <end position="14"/>
    </location>
</feature>
<feature type="transmembrane region" description="Helical; Name=I" evidence="4">
    <location>
        <begin position="15"/>
        <end position="45"/>
    </location>
</feature>
<feature type="topological domain" description="Mitochondrial matrix" evidence="4">
    <location>
        <begin position="46"/>
        <end position="59"/>
    </location>
</feature>
<feature type="transmembrane region" description="Helical; Name=II" evidence="4">
    <location>
        <begin position="60"/>
        <end position="87"/>
    </location>
</feature>
<feature type="topological domain" description="Mitochondrial intermembrane" evidence="4">
    <location>
        <begin position="88"/>
        <end position="227"/>
    </location>
</feature>
<feature type="binding site" evidence="4">
    <location>
        <position position="161"/>
    </location>
    <ligand>
        <name>Cu cation</name>
        <dbReference type="ChEBI" id="CHEBI:23378"/>
        <label>A1</label>
    </ligand>
</feature>
<feature type="binding site" evidence="4">
    <location>
        <position position="196"/>
    </location>
    <ligand>
        <name>Cu cation</name>
        <dbReference type="ChEBI" id="CHEBI:23378"/>
        <label>A1</label>
    </ligand>
</feature>
<feature type="binding site" evidence="4">
    <location>
        <position position="196"/>
    </location>
    <ligand>
        <name>Cu cation</name>
        <dbReference type="ChEBI" id="CHEBI:23378"/>
        <label>A2</label>
    </ligand>
</feature>
<feature type="binding site" evidence="4">
    <location>
        <position position="198"/>
    </location>
    <ligand>
        <name>Cu cation</name>
        <dbReference type="ChEBI" id="CHEBI:23378"/>
        <label>A2</label>
    </ligand>
</feature>
<feature type="binding site" evidence="4">
    <location>
        <position position="198"/>
    </location>
    <ligand>
        <name>Mg(2+)</name>
        <dbReference type="ChEBI" id="CHEBI:18420"/>
        <note>ligand shared with MT-CO1</note>
    </ligand>
</feature>
<feature type="binding site" evidence="4">
    <location>
        <position position="200"/>
    </location>
    <ligand>
        <name>Cu cation</name>
        <dbReference type="ChEBI" id="CHEBI:23378"/>
        <label>A1</label>
    </ligand>
</feature>
<feature type="binding site" evidence="4">
    <location>
        <position position="200"/>
    </location>
    <ligand>
        <name>Cu cation</name>
        <dbReference type="ChEBI" id="CHEBI:23378"/>
        <label>A2</label>
    </ligand>
</feature>
<feature type="binding site" evidence="4">
    <location>
        <position position="204"/>
    </location>
    <ligand>
        <name>Cu cation</name>
        <dbReference type="ChEBI" id="CHEBI:23378"/>
        <label>A2</label>
    </ligand>
</feature>
<feature type="binding site" evidence="4">
    <location>
        <position position="207"/>
    </location>
    <ligand>
        <name>Cu cation</name>
        <dbReference type="ChEBI" id="CHEBI:23378"/>
        <label>A1</label>
    </ligand>
</feature>
<feature type="modified residue" description="Phosphotyrosine" evidence="2">
    <location>
        <position position="218"/>
    </location>
</feature>
<name>COX2_MICNA</name>
<organism>
    <name type="scientific">Micaelamys namaquensis</name>
    <name type="common">Namaqua rock rat</name>
    <name type="synonym">Aethomys namaquensis</name>
    <dbReference type="NCBI Taxonomy" id="472707"/>
    <lineage>
        <taxon>Eukaryota</taxon>
        <taxon>Metazoa</taxon>
        <taxon>Chordata</taxon>
        <taxon>Craniata</taxon>
        <taxon>Vertebrata</taxon>
        <taxon>Euteleostomi</taxon>
        <taxon>Mammalia</taxon>
        <taxon>Eutheria</taxon>
        <taxon>Euarchontoglires</taxon>
        <taxon>Glires</taxon>
        <taxon>Rodentia</taxon>
        <taxon>Myomorpha</taxon>
        <taxon>Muroidea</taxon>
        <taxon>Muridae</taxon>
        <taxon>Murinae</taxon>
        <taxon>Micaelamys</taxon>
    </lineage>
</organism>
<proteinExistence type="inferred from homology"/>
<evidence type="ECO:0000250" key="1">
    <source>
        <dbReference type="UniProtKB" id="P00403"/>
    </source>
</evidence>
<evidence type="ECO:0000250" key="2">
    <source>
        <dbReference type="UniProtKB" id="P00406"/>
    </source>
</evidence>
<evidence type="ECO:0000250" key="3">
    <source>
        <dbReference type="UniProtKB" id="P00410"/>
    </source>
</evidence>
<evidence type="ECO:0000250" key="4">
    <source>
        <dbReference type="UniProtKB" id="P68530"/>
    </source>
</evidence>
<evidence type="ECO:0000305" key="5"/>
<geneLocation type="mitochondrion"/>
<gene>
    <name type="primary">MT-CO2</name>
    <name type="synonym">COII</name>
    <name type="synonym">COX2</name>
    <name type="synonym">COXII</name>
    <name type="synonym">MTCO2</name>
</gene>
<accession>Q38S41</accession>
<dbReference type="EC" id="7.1.1.9"/>
<dbReference type="EMBL" id="DQ019089">
    <property type="protein sequence ID" value="ABA28359.1"/>
    <property type="molecule type" value="Genomic_DNA"/>
</dbReference>
<dbReference type="SMR" id="Q38S41"/>
<dbReference type="GO" id="GO:0005743">
    <property type="term" value="C:mitochondrial inner membrane"/>
    <property type="evidence" value="ECO:0007669"/>
    <property type="project" value="UniProtKB-SubCell"/>
</dbReference>
<dbReference type="GO" id="GO:0045277">
    <property type="term" value="C:respiratory chain complex IV"/>
    <property type="evidence" value="ECO:0000250"/>
    <property type="project" value="UniProtKB"/>
</dbReference>
<dbReference type="GO" id="GO:0005507">
    <property type="term" value="F:copper ion binding"/>
    <property type="evidence" value="ECO:0007669"/>
    <property type="project" value="InterPro"/>
</dbReference>
<dbReference type="GO" id="GO:0004129">
    <property type="term" value="F:cytochrome-c oxidase activity"/>
    <property type="evidence" value="ECO:0007669"/>
    <property type="project" value="UniProtKB-EC"/>
</dbReference>
<dbReference type="GO" id="GO:0042773">
    <property type="term" value="P:ATP synthesis coupled electron transport"/>
    <property type="evidence" value="ECO:0007669"/>
    <property type="project" value="TreeGrafter"/>
</dbReference>
<dbReference type="CDD" id="cd13912">
    <property type="entry name" value="CcO_II_C"/>
    <property type="match status" value="1"/>
</dbReference>
<dbReference type="FunFam" id="1.10.287.90:FF:000001">
    <property type="entry name" value="Cytochrome c oxidase subunit 2"/>
    <property type="match status" value="1"/>
</dbReference>
<dbReference type="FunFam" id="2.60.40.420:FF:000001">
    <property type="entry name" value="Cytochrome c oxidase subunit 2"/>
    <property type="match status" value="1"/>
</dbReference>
<dbReference type="Gene3D" id="1.10.287.90">
    <property type="match status" value="1"/>
</dbReference>
<dbReference type="Gene3D" id="2.60.40.420">
    <property type="entry name" value="Cupredoxins - blue copper proteins"/>
    <property type="match status" value="1"/>
</dbReference>
<dbReference type="InterPro" id="IPR045187">
    <property type="entry name" value="CcO_II"/>
</dbReference>
<dbReference type="InterPro" id="IPR002429">
    <property type="entry name" value="CcO_II-like_C"/>
</dbReference>
<dbReference type="InterPro" id="IPR034210">
    <property type="entry name" value="CcO_II_C"/>
</dbReference>
<dbReference type="InterPro" id="IPR001505">
    <property type="entry name" value="Copper_CuA"/>
</dbReference>
<dbReference type="InterPro" id="IPR008972">
    <property type="entry name" value="Cupredoxin"/>
</dbReference>
<dbReference type="InterPro" id="IPR014222">
    <property type="entry name" value="Cyt_c_oxidase_su2"/>
</dbReference>
<dbReference type="InterPro" id="IPR011759">
    <property type="entry name" value="Cyt_c_oxidase_su2_TM_dom"/>
</dbReference>
<dbReference type="InterPro" id="IPR036257">
    <property type="entry name" value="Cyt_c_oxidase_su2_TM_sf"/>
</dbReference>
<dbReference type="NCBIfam" id="TIGR02866">
    <property type="entry name" value="CoxB"/>
    <property type="match status" value="1"/>
</dbReference>
<dbReference type="PANTHER" id="PTHR22888:SF9">
    <property type="entry name" value="CYTOCHROME C OXIDASE SUBUNIT 2"/>
    <property type="match status" value="1"/>
</dbReference>
<dbReference type="PANTHER" id="PTHR22888">
    <property type="entry name" value="CYTOCHROME C OXIDASE, SUBUNIT II"/>
    <property type="match status" value="1"/>
</dbReference>
<dbReference type="Pfam" id="PF00116">
    <property type="entry name" value="COX2"/>
    <property type="match status" value="1"/>
</dbReference>
<dbReference type="Pfam" id="PF02790">
    <property type="entry name" value="COX2_TM"/>
    <property type="match status" value="1"/>
</dbReference>
<dbReference type="PRINTS" id="PR01166">
    <property type="entry name" value="CYCOXIDASEII"/>
</dbReference>
<dbReference type="SUPFAM" id="SSF49503">
    <property type="entry name" value="Cupredoxins"/>
    <property type="match status" value="1"/>
</dbReference>
<dbReference type="SUPFAM" id="SSF81464">
    <property type="entry name" value="Cytochrome c oxidase subunit II-like, transmembrane region"/>
    <property type="match status" value="1"/>
</dbReference>
<dbReference type="PROSITE" id="PS00078">
    <property type="entry name" value="COX2"/>
    <property type="match status" value="1"/>
</dbReference>
<dbReference type="PROSITE" id="PS50857">
    <property type="entry name" value="COX2_CUA"/>
    <property type="match status" value="1"/>
</dbReference>
<dbReference type="PROSITE" id="PS50999">
    <property type="entry name" value="COX2_TM"/>
    <property type="match status" value="1"/>
</dbReference>